<gene>
    <name type="ordered locus">MJ0755</name>
</gene>
<sequence length="342" mass="38778">MWKKLMLLLLMAIPLVSAVAIPSISATDVVLVSDNCADQCTALEVADALNATVITTEWGIYNESLIDEILALNPDKVIIIGGPLAVVENYTTALENVGITVERIGGSNRYETNANVTLRFQNQFRYAFGNNTTVCVCHGFDDIALNETMGLIKNGTCLVLLTNGVNLSVEPQKLQLRINKVEIIENPICPFCNYSKLMLKLQKNGLKIEIKQIPKVKVKLMLQNRIRIMERRILMLKRMGVNVTDLEEKLKEVEQLMEQNRYQEAYRIMVQLQEEQMVRVKLHLHPMWSKMKRGKIQENKNASHIYHQNINNLTNELNTSRGGIGGINAPHIYHQRINSTIQ</sequence>
<proteinExistence type="inferred from homology"/>
<organism>
    <name type="scientific">Methanocaldococcus jannaschii (strain ATCC 43067 / DSM 2661 / JAL-1 / JCM 10045 / NBRC 100440)</name>
    <name type="common">Methanococcus jannaschii</name>
    <dbReference type="NCBI Taxonomy" id="243232"/>
    <lineage>
        <taxon>Archaea</taxon>
        <taxon>Methanobacteriati</taxon>
        <taxon>Methanobacteriota</taxon>
        <taxon>Methanomada group</taxon>
        <taxon>Methanococci</taxon>
        <taxon>Methanococcales</taxon>
        <taxon>Methanocaldococcaceae</taxon>
        <taxon>Methanocaldococcus</taxon>
    </lineage>
</organism>
<reference key="1">
    <citation type="journal article" date="1996" name="Science">
        <title>Complete genome sequence of the methanogenic archaeon, Methanococcus jannaschii.</title>
        <authorList>
            <person name="Bult C.J."/>
            <person name="White O."/>
            <person name="Olsen G.J."/>
            <person name="Zhou L."/>
            <person name="Fleischmann R.D."/>
            <person name="Sutton G.G."/>
            <person name="Blake J.A."/>
            <person name="FitzGerald L.M."/>
            <person name="Clayton R.A."/>
            <person name="Gocayne J.D."/>
            <person name="Kerlavage A.R."/>
            <person name="Dougherty B.A."/>
            <person name="Tomb J.-F."/>
            <person name="Adams M.D."/>
            <person name="Reich C.I."/>
            <person name="Overbeek R."/>
            <person name="Kirkness E.F."/>
            <person name="Weinstock K.G."/>
            <person name="Merrick J.M."/>
            <person name="Glodek A."/>
            <person name="Scott J.L."/>
            <person name="Geoghagen N.S.M."/>
            <person name="Weidman J.F."/>
            <person name="Fuhrmann J.L."/>
            <person name="Nguyen D."/>
            <person name="Utterback T.R."/>
            <person name="Kelley J.M."/>
            <person name="Peterson J.D."/>
            <person name="Sadow P.W."/>
            <person name="Hanna M.C."/>
            <person name="Cotton M.D."/>
            <person name="Roberts K.M."/>
            <person name="Hurst M.A."/>
            <person name="Kaine B.P."/>
            <person name="Borodovsky M."/>
            <person name="Klenk H.-P."/>
            <person name="Fraser C.M."/>
            <person name="Smith H.O."/>
            <person name="Woese C.R."/>
            <person name="Venter J.C."/>
        </authorList>
    </citation>
    <scope>NUCLEOTIDE SEQUENCE [LARGE SCALE GENOMIC DNA]</scope>
    <source>
        <strain>ATCC 43067 / DSM 2661 / JAL-1 / JCM 10045 / NBRC 100440</strain>
    </source>
</reference>
<dbReference type="EMBL" id="L77117">
    <property type="protein sequence ID" value="AAB98748.1"/>
    <property type="molecule type" value="Genomic_DNA"/>
</dbReference>
<dbReference type="PIR" id="C64394">
    <property type="entry name" value="C64394"/>
</dbReference>
<dbReference type="RefSeq" id="WP_010870260.1">
    <property type="nucleotide sequence ID" value="NC_000909.1"/>
</dbReference>
<dbReference type="SMR" id="Q58165"/>
<dbReference type="FunCoup" id="Q58165">
    <property type="interactions" value="4"/>
</dbReference>
<dbReference type="STRING" id="243232.MJ_0755"/>
<dbReference type="PaxDb" id="243232-MJ_0755"/>
<dbReference type="EnsemblBacteria" id="AAB98748">
    <property type="protein sequence ID" value="AAB98748"/>
    <property type="gene ID" value="MJ_0755"/>
</dbReference>
<dbReference type="GeneID" id="1451632"/>
<dbReference type="KEGG" id="mja:MJ_0755"/>
<dbReference type="eggNOG" id="arCOG00388">
    <property type="taxonomic scope" value="Archaea"/>
</dbReference>
<dbReference type="HOGENOM" id="CLU_054697_1_0_2"/>
<dbReference type="InParanoid" id="Q58165"/>
<dbReference type="OrthoDB" id="86217at2157"/>
<dbReference type="PhylomeDB" id="Q58165"/>
<dbReference type="Proteomes" id="UP000000805">
    <property type="component" value="Chromosome"/>
</dbReference>
<dbReference type="Gene3D" id="3.40.50.12090">
    <property type="match status" value="1"/>
</dbReference>
<dbReference type="InterPro" id="IPR051922">
    <property type="entry name" value="Bact_Sporulation_Assoc"/>
</dbReference>
<dbReference type="PANTHER" id="PTHR30032:SF1">
    <property type="entry name" value="N-ACETYLMURAMOYL-L-ALANINE AMIDASE LYTC"/>
    <property type="match status" value="1"/>
</dbReference>
<dbReference type="PANTHER" id="PTHR30032">
    <property type="entry name" value="N-ACETYLMURAMOYL-L-ALANINE AMIDASE-RELATED"/>
    <property type="match status" value="1"/>
</dbReference>
<protein>
    <recommendedName>
        <fullName>Uncharacterized protein MJ0755</fullName>
    </recommendedName>
</protein>
<keyword id="KW-1185">Reference proteome</keyword>
<keyword id="KW-0732">Signal</keyword>
<feature type="signal peptide" evidence="1">
    <location>
        <begin position="1"/>
        <end position="18"/>
    </location>
</feature>
<feature type="chain" id="PRO_0000013995" description="Uncharacterized protein MJ0755">
    <location>
        <begin position="19"/>
        <end position="342"/>
    </location>
</feature>
<name>Y755_METJA</name>
<accession>Q58165</accession>
<evidence type="ECO:0000255" key="1"/>